<dbReference type="EC" id="6.3.2.6" evidence="1"/>
<dbReference type="EMBL" id="BX950851">
    <property type="protein sequence ID" value="CAG74174.1"/>
    <property type="molecule type" value="Genomic_DNA"/>
</dbReference>
<dbReference type="RefSeq" id="WP_011092853.1">
    <property type="nucleotide sequence ID" value="NC_004547.2"/>
</dbReference>
<dbReference type="SMR" id="Q6D7R1"/>
<dbReference type="STRING" id="218491.ECA1264"/>
<dbReference type="GeneID" id="57208074"/>
<dbReference type="KEGG" id="eca:ECA1264"/>
<dbReference type="PATRIC" id="fig|218491.5.peg.1287"/>
<dbReference type="eggNOG" id="COG0152">
    <property type="taxonomic scope" value="Bacteria"/>
</dbReference>
<dbReference type="HOGENOM" id="CLU_061495_2_0_6"/>
<dbReference type="OrthoDB" id="9801549at2"/>
<dbReference type="UniPathway" id="UPA00074">
    <property type="reaction ID" value="UER00131"/>
</dbReference>
<dbReference type="Proteomes" id="UP000007966">
    <property type="component" value="Chromosome"/>
</dbReference>
<dbReference type="GO" id="GO:0005829">
    <property type="term" value="C:cytosol"/>
    <property type="evidence" value="ECO:0007669"/>
    <property type="project" value="TreeGrafter"/>
</dbReference>
<dbReference type="GO" id="GO:0005524">
    <property type="term" value="F:ATP binding"/>
    <property type="evidence" value="ECO:0007669"/>
    <property type="project" value="UniProtKB-KW"/>
</dbReference>
<dbReference type="GO" id="GO:0004639">
    <property type="term" value="F:phosphoribosylaminoimidazolesuccinocarboxamide synthase activity"/>
    <property type="evidence" value="ECO:0007669"/>
    <property type="project" value="UniProtKB-UniRule"/>
</dbReference>
<dbReference type="GO" id="GO:0006189">
    <property type="term" value="P:'de novo' IMP biosynthetic process"/>
    <property type="evidence" value="ECO:0007669"/>
    <property type="project" value="UniProtKB-UniRule"/>
</dbReference>
<dbReference type="GO" id="GO:0009236">
    <property type="term" value="P:cobalamin biosynthetic process"/>
    <property type="evidence" value="ECO:0007669"/>
    <property type="project" value="InterPro"/>
</dbReference>
<dbReference type="CDD" id="cd01415">
    <property type="entry name" value="SAICAR_synt_PurC"/>
    <property type="match status" value="1"/>
</dbReference>
<dbReference type="FunFam" id="3.30.200.20:FF:000086">
    <property type="entry name" value="Phosphoribosylaminoimidazole-succinocarboxamide synthase"/>
    <property type="match status" value="1"/>
</dbReference>
<dbReference type="FunFam" id="3.30.470.20:FF:000006">
    <property type="entry name" value="Phosphoribosylaminoimidazole-succinocarboxamide synthase"/>
    <property type="match status" value="1"/>
</dbReference>
<dbReference type="Gene3D" id="3.30.470.20">
    <property type="entry name" value="ATP-grasp fold, B domain"/>
    <property type="match status" value="1"/>
</dbReference>
<dbReference type="Gene3D" id="3.30.200.20">
    <property type="entry name" value="Phosphorylase Kinase, domain 1"/>
    <property type="match status" value="1"/>
</dbReference>
<dbReference type="HAMAP" id="MF_00137">
    <property type="entry name" value="SAICAR_synth"/>
    <property type="match status" value="1"/>
</dbReference>
<dbReference type="InterPro" id="IPR028923">
    <property type="entry name" value="SAICAR_synt/ADE2_N"/>
</dbReference>
<dbReference type="InterPro" id="IPR033934">
    <property type="entry name" value="SAICAR_synt_PurC"/>
</dbReference>
<dbReference type="InterPro" id="IPR001636">
    <property type="entry name" value="SAICAR_synth"/>
</dbReference>
<dbReference type="InterPro" id="IPR050089">
    <property type="entry name" value="SAICAR_synthetase"/>
</dbReference>
<dbReference type="InterPro" id="IPR018236">
    <property type="entry name" value="SAICAR_synthetase_CS"/>
</dbReference>
<dbReference type="NCBIfam" id="TIGR00081">
    <property type="entry name" value="purC"/>
    <property type="match status" value="1"/>
</dbReference>
<dbReference type="PANTHER" id="PTHR43599">
    <property type="entry name" value="MULTIFUNCTIONAL PROTEIN ADE2"/>
    <property type="match status" value="1"/>
</dbReference>
<dbReference type="PANTHER" id="PTHR43599:SF3">
    <property type="entry name" value="SI:DKEY-6E2.2"/>
    <property type="match status" value="1"/>
</dbReference>
<dbReference type="Pfam" id="PF01259">
    <property type="entry name" value="SAICAR_synt"/>
    <property type="match status" value="1"/>
</dbReference>
<dbReference type="SUPFAM" id="SSF56104">
    <property type="entry name" value="SAICAR synthase-like"/>
    <property type="match status" value="1"/>
</dbReference>
<dbReference type="PROSITE" id="PS01057">
    <property type="entry name" value="SAICAR_SYNTHETASE_1"/>
    <property type="match status" value="1"/>
</dbReference>
<dbReference type="PROSITE" id="PS01058">
    <property type="entry name" value="SAICAR_SYNTHETASE_2"/>
    <property type="match status" value="1"/>
</dbReference>
<feature type="chain" id="PRO_1000018704" description="Phosphoribosylaminoimidazole-succinocarboxamide synthase">
    <location>
        <begin position="1"/>
        <end position="237"/>
    </location>
</feature>
<comment type="catalytic activity">
    <reaction evidence="1">
        <text>5-amino-1-(5-phospho-D-ribosyl)imidazole-4-carboxylate + L-aspartate + ATP = (2S)-2-[5-amino-1-(5-phospho-beta-D-ribosyl)imidazole-4-carboxamido]succinate + ADP + phosphate + 2 H(+)</text>
        <dbReference type="Rhea" id="RHEA:22628"/>
        <dbReference type="ChEBI" id="CHEBI:15378"/>
        <dbReference type="ChEBI" id="CHEBI:29991"/>
        <dbReference type="ChEBI" id="CHEBI:30616"/>
        <dbReference type="ChEBI" id="CHEBI:43474"/>
        <dbReference type="ChEBI" id="CHEBI:58443"/>
        <dbReference type="ChEBI" id="CHEBI:77657"/>
        <dbReference type="ChEBI" id="CHEBI:456216"/>
        <dbReference type="EC" id="6.3.2.6"/>
    </reaction>
</comment>
<comment type="pathway">
    <text evidence="1">Purine metabolism; IMP biosynthesis via de novo pathway; 5-amino-1-(5-phospho-D-ribosyl)imidazole-4-carboxamide from 5-amino-1-(5-phospho-D-ribosyl)imidazole-4-carboxylate: step 1/2.</text>
</comment>
<comment type="similarity">
    <text evidence="1">Belongs to the SAICAR synthetase family.</text>
</comment>
<reference key="1">
    <citation type="journal article" date="2004" name="Proc. Natl. Acad. Sci. U.S.A.">
        <title>Genome sequence of the enterobacterial phytopathogen Erwinia carotovora subsp. atroseptica and characterization of virulence factors.</title>
        <authorList>
            <person name="Bell K.S."/>
            <person name="Sebaihia M."/>
            <person name="Pritchard L."/>
            <person name="Holden M.T.G."/>
            <person name="Hyman L.J."/>
            <person name="Holeva M.C."/>
            <person name="Thomson N.R."/>
            <person name="Bentley S.D."/>
            <person name="Churcher L.J.C."/>
            <person name="Mungall K."/>
            <person name="Atkin R."/>
            <person name="Bason N."/>
            <person name="Brooks K."/>
            <person name="Chillingworth T."/>
            <person name="Clark K."/>
            <person name="Doggett J."/>
            <person name="Fraser A."/>
            <person name="Hance Z."/>
            <person name="Hauser H."/>
            <person name="Jagels K."/>
            <person name="Moule S."/>
            <person name="Norbertczak H."/>
            <person name="Ormond D."/>
            <person name="Price C."/>
            <person name="Quail M.A."/>
            <person name="Sanders M."/>
            <person name="Walker D."/>
            <person name="Whitehead S."/>
            <person name="Salmond G.P.C."/>
            <person name="Birch P.R.J."/>
            <person name="Parkhill J."/>
            <person name="Toth I.K."/>
        </authorList>
    </citation>
    <scope>NUCLEOTIDE SEQUENCE [LARGE SCALE GENOMIC DNA]</scope>
    <source>
        <strain>SCRI 1043 / ATCC BAA-672</strain>
    </source>
</reference>
<gene>
    <name evidence="1" type="primary">purC</name>
    <name type="ordered locus">ECA1264</name>
</gene>
<organism>
    <name type="scientific">Pectobacterium atrosepticum (strain SCRI 1043 / ATCC BAA-672)</name>
    <name type="common">Erwinia carotovora subsp. atroseptica</name>
    <dbReference type="NCBI Taxonomy" id="218491"/>
    <lineage>
        <taxon>Bacteria</taxon>
        <taxon>Pseudomonadati</taxon>
        <taxon>Pseudomonadota</taxon>
        <taxon>Gammaproteobacteria</taxon>
        <taxon>Enterobacterales</taxon>
        <taxon>Pectobacteriaceae</taxon>
        <taxon>Pectobacterium</taxon>
    </lineage>
</organism>
<evidence type="ECO:0000255" key="1">
    <source>
        <dbReference type="HAMAP-Rule" id="MF_00137"/>
    </source>
</evidence>
<proteinExistence type="inferred from homology"/>
<sequence length="237" mass="26832">MQKLAELYRGKAKTVYTTEDPDLLVLEFRNDTSAGDGARIEQFDRKGMVNNKFNHFIMSKLEEAGIPTQMVSLLSDNEVLVKKLEMVPVECVVRNRAAGSLVKRLGIEEGIELNPPLFDLFLKNDAMHDPMVNESYCKTFGWVSEENLARMKELSYKANDVLSKLFGDAGLILVDFKLEFGLFNGEVVLGDEFSPDGSRLWDKETLNKMDKDRFRQSLGGLIEAYEEVAHRIGVKLD</sequence>
<protein>
    <recommendedName>
        <fullName evidence="1">Phosphoribosylaminoimidazole-succinocarboxamide synthase</fullName>
        <ecNumber evidence="1">6.3.2.6</ecNumber>
    </recommendedName>
    <alternativeName>
        <fullName evidence="1">SAICAR synthetase</fullName>
    </alternativeName>
</protein>
<accession>Q6D7R1</accession>
<name>PUR7_PECAS</name>
<keyword id="KW-0067">ATP-binding</keyword>
<keyword id="KW-0436">Ligase</keyword>
<keyword id="KW-0547">Nucleotide-binding</keyword>
<keyword id="KW-0658">Purine biosynthesis</keyword>
<keyword id="KW-1185">Reference proteome</keyword>